<gene>
    <name evidence="1" type="primary">gatB</name>
    <name type="ordered locus">PCC7424_3567</name>
</gene>
<comment type="function">
    <text evidence="1">Allows the formation of correctly charged Asn-tRNA(Asn) or Gln-tRNA(Gln) through the transamidation of misacylated Asp-tRNA(Asn) or Glu-tRNA(Gln) in organisms which lack either or both of asparaginyl-tRNA or glutaminyl-tRNA synthetases. The reaction takes place in the presence of glutamine and ATP through an activated phospho-Asp-tRNA(Asn) or phospho-Glu-tRNA(Gln).</text>
</comment>
<comment type="catalytic activity">
    <reaction evidence="1">
        <text>L-glutamyl-tRNA(Gln) + L-glutamine + ATP + H2O = L-glutaminyl-tRNA(Gln) + L-glutamate + ADP + phosphate + H(+)</text>
        <dbReference type="Rhea" id="RHEA:17521"/>
        <dbReference type="Rhea" id="RHEA-COMP:9681"/>
        <dbReference type="Rhea" id="RHEA-COMP:9684"/>
        <dbReference type="ChEBI" id="CHEBI:15377"/>
        <dbReference type="ChEBI" id="CHEBI:15378"/>
        <dbReference type="ChEBI" id="CHEBI:29985"/>
        <dbReference type="ChEBI" id="CHEBI:30616"/>
        <dbReference type="ChEBI" id="CHEBI:43474"/>
        <dbReference type="ChEBI" id="CHEBI:58359"/>
        <dbReference type="ChEBI" id="CHEBI:78520"/>
        <dbReference type="ChEBI" id="CHEBI:78521"/>
        <dbReference type="ChEBI" id="CHEBI:456216"/>
    </reaction>
</comment>
<comment type="catalytic activity">
    <reaction evidence="1">
        <text>L-aspartyl-tRNA(Asn) + L-glutamine + ATP + H2O = L-asparaginyl-tRNA(Asn) + L-glutamate + ADP + phosphate + 2 H(+)</text>
        <dbReference type="Rhea" id="RHEA:14513"/>
        <dbReference type="Rhea" id="RHEA-COMP:9674"/>
        <dbReference type="Rhea" id="RHEA-COMP:9677"/>
        <dbReference type="ChEBI" id="CHEBI:15377"/>
        <dbReference type="ChEBI" id="CHEBI:15378"/>
        <dbReference type="ChEBI" id="CHEBI:29985"/>
        <dbReference type="ChEBI" id="CHEBI:30616"/>
        <dbReference type="ChEBI" id="CHEBI:43474"/>
        <dbReference type="ChEBI" id="CHEBI:58359"/>
        <dbReference type="ChEBI" id="CHEBI:78515"/>
        <dbReference type="ChEBI" id="CHEBI:78516"/>
        <dbReference type="ChEBI" id="CHEBI:456216"/>
    </reaction>
</comment>
<comment type="subunit">
    <text evidence="1">Heterotrimer of A, B and C subunits.</text>
</comment>
<comment type="similarity">
    <text evidence="1">Belongs to the GatB/GatE family. GatB subfamily.</text>
</comment>
<evidence type="ECO:0000255" key="1">
    <source>
        <dbReference type="HAMAP-Rule" id="MF_00121"/>
    </source>
</evidence>
<protein>
    <recommendedName>
        <fullName evidence="1">Aspartyl/glutamyl-tRNA(Asn/Gln) amidotransferase subunit B</fullName>
        <shortName evidence="1">Asp/Glu-ADT subunit B</shortName>
        <ecNumber evidence="1">6.3.5.-</ecNumber>
    </recommendedName>
</protein>
<accession>B7KGN0</accession>
<keyword id="KW-0067">ATP-binding</keyword>
<keyword id="KW-0436">Ligase</keyword>
<keyword id="KW-0547">Nucleotide-binding</keyword>
<keyword id="KW-0648">Protein biosynthesis</keyword>
<keyword id="KW-1185">Reference proteome</keyword>
<feature type="chain" id="PRO_1000117618" description="Aspartyl/glutamyl-tRNA(Asn/Gln) amidotransferase subunit B">
    <location>
        <begin position="1"/>
        <end position="495"/>
    </location>
</feature>
<proteinExistence type="inferred from homology"/>
<sequence>MVTATPVKTEYEAIIGLETHCQLNTHSKIFCNCSTKFDSPPNTNVCPICLGYPGVLPVLNLEVLASAVKMGLAINGKIASYSKFDRKQYFYPDLPKNYQISQYDLPIVEQGSLEIEVVDKETKEVTRKTIGITRLHMEEDAGKLVHAGSDRLAGSTYSLVDFNRTGVPLLEIVSEPDLRSGQEAAEYAQELRRLVRYLGISDGNMQEGSLRCDVNISVRPKGQKKFGTKVEIKNMNSFSAIQKAIEYEIERQIEAIENGEPIRLETRLWEEGKQRTVTMRLKEGASDYRYFPEPDLPPIEVSQEQIETWKAQIPELPAQKRTRYETELGLSAYDARVLTDEREVAEYFETAVATGANAKLVANWVTQDIAAYLNNNKLNIGEIALKSEGLGELVNLIEEGTISGKIAKDILPELLTDGGSPKTLVEKKGLIQISDTGELEKIIDEVIASHPKELEKYRSGKKNLKGFFVGQVLKKTGGRADPKLTNQLLDKKLEA</sequence>
<name>GATB_GLOC7</name>
<organism>
    <name type="scientific">Gloeothece citriformis (strain PCC 7424)</name>
    <name type="common">Cyanothece sp. (strain PCC 7424)</name>
    <dbReference type="NCBI Taxonomy" id="65393"/>
    <lineage>
        <taxon>Bacteria</taxon>
        <taxon>Bacillati</taxon>
        <taxon>Cyanobacteriota</taxon>
        <taxon>Cyanophyceae</taxon>
        <taxon>Oscillatoriophycideae</taxon>
        <taxon>Chroococcales</taxon>
        <taxon>Aphanothecaceae</taxon>
        <taxon>Gloeothece</taxon>
        <taxon>Gloeothece citriformis</taxon>
    </lineage>
</organism>
<reference key="1">
    <citation type="journal article" date="2011" name="MBio">
        <title>Novel metabolic attributes of the genus Cyanothece, comprising a group of unicellular nitrogen-fixing Cyanobacteria.</title>
        <authorList>
            <person name="Bandyopadhyay A."/>
            <person name="Elvitigala T."/>
            <person name="Welsh E."/>
            <person name="Stockel J."/>
            <person name="Liberton M."/>
            <person name="Min H."/>
            <person name="Sherman L.A."/>
            <person name="Pakrasi H.B."/>
        </authorList>
    </citation>
    <scope>NUCLEOTIDE SEQUENCE [LARGE SCALE GENOMIC DNA]</scope>
    <source>
        <strain>PCC 7424</strain>
    </source>
</reference>
<dbReference type="EC" id="6.3.5.-" evidence="1"/>
<dbReference type="EMBL" id="CP001291">
    <property type="protein sequence ID" value="ACK71957.1"/>
    <property type="molecule type" value="Genomic_DNA"/>
</dbReference>
<dbReference type="RefSeq" id="WP_015955550.1">
    <property type="nucleotide sequence ID" value="NC_011729.1"/>
</dbReference>
<dbReference type="SMR" id="B7KGN0"/>
<dbReference type="STRING" id="65393.PCC7424_3567"/>
<dbReference type="KEGG" id="cyc:PCC7424_3567"/>
<dbReference type="eggNOG" id="COG0064">
    <property type="taxonomic scope" value="Bacteria"/>
</dbReference>
<dbReference type="HOGENOM" id="CLU_019240_0_0_3"/>
<dbReference type="OrthoDB" id="9804078at2"/>
<dbReference type="Proteomes" id="UP000002384">
    <property type="component" value="Chromosome"/>
</dbReference>
<dbReference type="GO" id="GO:0050566">
    <property type="term" value="F:asparaginyl-tRNA synthase (glutamine-hydrolyzing) activity"/>
    <property type="evidence" value="ECO:0007669"/>
    <property type="project" value="RHEA"/>
</dbReference>
<dbReference type="GO" id="GO:0005524">
    <property type="term" value="F:ATP binding"/>
    <property type="evidence" value="ECO:0007669"/>
    <property type="project" value="UniProtKB-KW"/>
</dbReference>
<dbReference type="GO" id="GO:0050567">
    <property type="term" value="F:glutaminyl-tRNA synthase (glutamine-hydrolyzing) activity"/>
    <property type="evidence" value="ECO:0007669"/>
    <property type="project" value="UniProtKB-UniRule"/>
</dbReference>
<dbReference type="GO" id="GO:0070681">
    <property type="term" value="P:glutaminyl-tRNAGln biosynthesis via transamidation"/>
    <property type="evidence" value="ECO:0007669"/>
    <property type="project" value="TreeGrafter"/>
</dbReference>
<dbReference type="GO" id="GO:0006412">
    <property type="term" value="P:translation"/>
    <property type="evidence" value="ECO:0007669"/>
    <property type="project" value="UniProtKB-UniRule"/>
</dbReference>
<dbReference type="FunFam" id="1.10.10.410:FF:000001">
    <property type="entry name" value="Aspartyl/glutamyl-tRNA(Asn/Gln) amidotransferase subunit B"/>
    <property type="match status" value="1"/>
</dbReference>
<dbReference type="FunFam" id="1.10.150.380:FF:000001">
    <property type="entry name" value="Aspartyl/glutamyl-tRNA(Asn/Gln) amidotransferase subunit B"/>
    <property type="match status" value="1"/>
</dbReference>
<dbReference type="Gene3D" id="1.10.10.410">
    <property type="match status" value="1"/>
</dbReference>
<dbReference type="Gene3D" id="1.10.150.380">
    <property type="entry name" value="GatB domain, N-terminal subdomain"/>
    <property type="match status" value="1"/>
</dbReference>
<dbReference type="HAMAP" id="MF_00121">
    <property type="entry name" value="GatB"/>
    <property type="match status" value="1"/>
</dbReference>
<dbReference type="InterPro" id="IPR017959">
    <property type="entry name" value="Asn/Gln-tRNA_amidoTrfase_suB/E"/>
</dbReference>
<dbReference type="InterPro" id="IPR006075">
    <property type="entry name" value="Asn/Gln-tRNA_Trfase_suB/E_cat"/>
</dbReference>
<dbReference type="InterPro" id="IPR018027">
    <property type="entry name" value="Asn/Gln_amidotransferase"/>
</dbReference>
<dbReference type="InterPro" id="IPR003789">
    <property type="entry name" value="Asn/Gln_tRNA_amidoTrase-B-like"/>
</dbReference>
<dbReference type="InterPro" id="IPR004413">
    <property type="entry name" value="GatB"/>
</dbReference>
<dbReference type="InterPro" id="IPR042114">
    <property type="entry name" value="GatB_C_1"/>
</dbReference>
<dbReference type="InterPro" id="IPR023168">
    <property type="entry name" value="GatB_Yqey_C_2"/>
</dbReference>
<dbReference type="InterPro" id="IPR017958">
    <property type="entry name" value="Gln-tRNA_amidoTrfase_suB_CS"/>
</dbReference>
<dbReference type="InterPro" id="IPR014746">
    <property type="entry name" value="Gln_synth/guanido_kin_cat_dom"/>
</dbReference>
<dbReference type="NCBIfam" id="TIGR00133">
    <property type="entry name" value="gatB"/>
    <property type="match status" value="1"/>
</dbReference>
<dbReference type="NCBIfam" id="NF004012">
    <property type="entry name" value="PRK05477.1-2"/>
    <property type="match status" value="1"/>
</dbReference>
<dbReference type="NCBIfam" id="NF004014">
    <property type="entry name" value="PRK05477.1-4"/>
    <property type="match status" value="1"/>
</dbReference>
<dbReference type="PANTHER" id="PTHR11659">
    <property type="entry name" value="GLUTAMYL-TRNA GLN AMIDOTRANSFERASE SUBUNIT B MITOCHONDRIAL AND PROKARYOTIC PET112-RELATED"/>
    <property type="match status" value="1"/>
</dbReference>
<dbReference type="PANTHER" id="PTHR11659:SF0">
    <property type="entry name" value="GLUTAMYL-TRNA(GLN) AMIDOTRANSFERASE SUBUNIT B, MITOCHONDRIAL"/>
    <property type="match status" value="1"/>
</dbReference>
<dbReference type="Pfam" id="PF02934">
    <property type="entry name" value="GatB_N"/>
    <property type="match status" value="1"/>
</dbReference>
<dbReference type="Pfam" id="PF02637">
    <property type="entry name" value="GatB_Yqey"/>
    <property type="match status" value="1"/>
</dbReference>
<dbReference type="SMART" id="SM00845">
    <property type="entry name" value="GatB_Yqey"/>
    <property type="match status" value="1"/>
</dbReference>
<dbReference type="SUPFAM" id="SSF89095">
    <property type="entry name" value="GatB/YqeY motif"/>
    <property type="match status" value="1"/>
</dbReference>
<dbReference type="SUPFAM" id="SSF55931">
    <property type="entry name" value="Glutamine synthetase/guanido kinase"/>
    <property type="match status" value="1"/>
</dbReference>
<dbReference type="PROSITE" id="PS01234">
    <property type="entry name" value="GATB"/>
    <property type="match status" value="1"/>
</dbReference>